<evidence type="ECO:0000250" key="1">
    <source>
        <dbReference type="UniProtKB" id="A0A0H2XFP1"/>
    </source>
</evidence>
<evidence type="ECO:0000250" key="2">
    <source>
        <dbReference type="UniProtKB" id="P0C049"/>
    </source>
</evidence>
<evidence type="ECO:0000250" key="3">
    <source>
        <dbReference type="UniProtKB" id="Q2G188"/>
    </source>
</evidence>
<evidence type="ECO:0000255" key="4"/>
<evidence type="ECO:0000305" key="5"/>
<keyword id="KW-1003">Cell membrane</keyword>
<keyword id="KW-0472">Membrane</keyword>
<keyword id="KW-0812">Transmembrane</keyword>
<keyword id="KW-1133">Transmembrane helix</keyword>
<keyword id="KW-0843">Virulence</keyword>
<gene>
    <name evidence="2" type="primary">esaA</name>
    <name type="ordered locus">SAR0280</name>
</gene>
<proteinExistence type="inferred from homology"/>
<accession>Q6GK28</accession>
<sequence>MKKKNWIYALIVTLIIIIAIVSMIFFVQTKYGDQSEKGSQSVSNKNNKIHIAIVNEDQPTTYNGKKVELGQAFIKRLANEKNYKFETVTRNVAESGLKNGGYQVMIVIPENFSKLAMQLDAKTPSKISLQYKTAVGQKEEVAKNTEKVVSNVLNDFNKNLVEIYLTSIIDNLHNAQKNVGAIMTREHGVNSKFSNYLLNPINDFPELFTDTLVNSISANKDITKWFQTYNKSLLSANSDTFRVNTDYNVSTLIEKQNSLFDEHNTAMDKMLQDYKSQKDSVELDNYINALKQMDSQIDQQSSMQDTGKEEYKQTVKENLDKLREIIQSQESPFSKGMIEDYRKQLTESLQDELANNKDLQDALNSIKMNNAQFAENLEKQLHDDIVKEPDSDTTFIYNMSKQDFIAAGLNEDEANKYEAIVKEAKRYKNEYNLKKPLAEHINLTDYDNQVAQDTSSLINDGVKVQRTETIKSNDINQLTVATDPHFNFEGDIKINGKKYDIKDQSVQLDTSNKEYKVEVNGVAKLKKDAEKDFLKDKTMHLQLLFGQANRQDEPNDKKATSVVDVTLNHNLDGRLSKDALSQQLSALSRFDAHYKMYTDTKGREDKPFDNKRLIDMMVDQVINDMESFKDDKVAVLHQIDSMEENSDKLIDDILNNKKNTTKNKEDISKLIDQLENVKKTFAEEPQEPKIDKGKNDEFNTMSSNLDKEISRISEKSTQLLSDTQESKTIADSVSGQLNQLDNNVNKLHATGRALGVRANDLNRQMAKNDKDNELFAKEFKKVLQNSKDGDRQNQALKAFMSNPVQKKNLENVLANNGNTDVISPTLFVLLMYLLSMITAYIFYSYERAKGQMNFIKDDYSSKNNLWNNAITSGVIGATGLVEGLIVGLIAMNKFHVLAGYRAKFILMVILTMMVFVLINTYLLRQVKSIGMFLMIAALGLYFVAMNNLKAAGQGVTNKISPLSYIDNMFFNYLNAEHPIGLALVILTVLVIIGFVLNMFIKHFKKERLI</sequence>
<reference key="1">
    <citation type="journal article" date="2004" name="Proc. Natl. Acad. Sci. U.S.A.">
        <title>Complete genomes of two clinical Staphylococcus aureus strains: evidence for the rapid evolution of virulence and drug resistance.</title>
        <authorList>
            <person name="Holden M.T.G."/>
            <person name="Feil E.J."/>
            <person name="Lindsay J.A."/>
            <person name="Peacock S.J."/>
            <person name="Day N.P.J."/>
            <person name="Enright M.C."/>
            <person name="Foster T.J."/>
            <person name="Moore C.E."/>
            <person name="Hurst L."/>
            <person name="Atkin R."/>
            <person name="Barron A."/>
            <person name="Bason N."/>
            <person name="Bentley S.D."/>
            <person name="Chillingworth C."/>
            <person name="Chillingworth T."/>
            <person name="Churcher C."/>
            <person name="Clark L."/>
            <person name="Corton C."/>
            <person name="Cronin A."/>
            <person name="Doggett J."/>
            <person name="Dowd L."/>
            <person name="Feltwell T."/>
            <person name="Hance Z."/>
            <person name="Harris B."/>
            <person name="Hauser H."/>
            <person name="Holroyd S."/>
            <person name="Jagels K."/>
            <person name="James K.D."/>
            <person name="Lennard N."/>
            <person name="Line A."/>
            <person name="Mayes R."/>
            <person name="Moule S."/>
            <person name="Mungall K."/>
            <person name="Ormond D."/>
            <person name="Quail M.A."/>
            <person name="Rabbinowitsch E."/>
            <person name="Rutherford K.M."/>
            <person name="Sanders M."/>
            <person name="Sharp S."/>
            <person name="Simmonds M."/>
            <person name="Stevens K."/>
            <person name="Whitehead S."/>
            <person name="Barrell B.G."/>
            <person name="Spratt B.G."/>
            <person name="Parkhill J."/>
        </authorList>
    </citation>
    <scope>NUCLEOTIDE SEQUENCE [LARGE SCALE GENOMIC DNA]</scope>
    <source>
        <strain>MRSA252</strain>
    </source>
</reference>
<protein>
    <recommendedName>
        <fullName evidence="2">Type VII secretion system accessory factor EsaA</fullName>
    </recommendedName>
</protein>
<organism>
    <name type="scientific">Staphylococcus aureus (strain MRSA252)</name>
    <dbReference type="NCBI Taxonomy" id="282458"/>
    <lineage>
        <taxon>Bacteria</taxon>
        <taxon>Bacillati</taxon>
        <taxon>Bacillota</taxon>
        <taxon>Bacilli</taxon>
        <taxon>Bacillales</taxon>
        <taxon>Staphylococcaceae</taxon>
        <taxon>Staphylococcus</taxon>
    </lineage>
</organism>
<dbReference type="EMBL" id="BX571856">
    <property type="protein sequence ID" value="CAG39307.1"/>
    <property type="molecule type" value="Genomic_DNA"/>
</dbReference>
<dbReference type="RefSeq" id="WP_000728940.1">
    <property type="nucleotide sequence ID" value="NC_002952.2"/>
</dbReference>
<dbReference type="SMR" id="Q6GK28"/>
<dbReference type="KEGG" id="sar:SAR0280"/>
<dbReference type="HOGENOM" id="CLU_015018_0_0_9"/>
<dbReference type="Proteomes" id="UP000000596">
    <property type="component" value="Chromosome"/>
</dbReference>
<dbReference type="GO" id="GO:0005886">
    <property type="term" value="C:plasma membrane"/>
    <property type="evidence" value="ECO:0007669"/>
    <property type="project" value="UniProtKB-SubCell"/>
</dbReference>
<dbReference type="Gene3D" id="3.40.1710.10">
    <property type="entry name" value="abc type-2 transporter like domain"/>
    <property type="match status" value="1"/>
</dbReference>
<dbReference type="InterPro" id="IPR051328">
    <property type="entry name" value="T7SS_ABC-Transporter"/>
</dbReference>
<dbReference type="InterPro" id="IPR023838">
    <property type="entry name" value="T7SS_EsaA"/>
</dbReference>
<dbReference type="NCBIfam" id="TIGR03929">
    <property type="entry name" value="T7_esaA_Nterm"/>
    <property type="match status" value="1"/>
</dbReference>
<dbReference type="PANTHER" id="PTHR43077:SF10">
    <property type="entry name" value="TRANSPORT PERMEASE PROTEIN"/>
    <property type="match status" value="1"/>
</dbReference>
<dbReference type="PANTHER" id="PTHR43077">
    <property type="entry name" value="TRANSPORT PERMEASE YVFS-RELATED"/>
    <property type="match status" value="1"/>
</dbReference>
<comment type="function">
    <text evidence="1">Component of the type VII secretion system (Ess). Provides together with EssB and other components such as EssC and EssE a secretion platform across the cytoplasmic membrane in the host.</text>
</comment>
<comment type="subunit">
    <text evidence="1 3">Homodimer (By similarity). Interacts with EssB (By similarity).</text>
</comment>
<comment type="subcellular location">
    <subcellularLocation>
        <location evidence="3">Cell membrane</location>
        <topology evidence="4">Multi-pass membrane protein</topology>
    </subcellularLocation>
</comment>
<comment type="miscellaneous">
    <text evidence="5">This strain lacks esxB and esxC.</text>
</comment>
<comment type="similarity">
    <text evidence="5">Belongs to the EsaA family.</text>
</comment>
<name>ESAA_STAAR</name>
<feature type="chain" id="PRO_0000087039" description="Type VII secretion system accessory factor EsaA">
    <location>
        <begin position="1"/>
        <end position="1009"/>
    </location>
</feature>
<feature type="transmembrane region" description="Helical" evidence="4">
    <location>
        <begin position="7"/>
        <end position="27"/>
    </location>
</feature>
<feature type="transmembrane region" description="Helical" evidence="4">
    <location>
        <begin position="822"/>
        <end position="842"/>
    </location>
</feature>
<feature type="transmembrane region" description="Helical" evidence="4">
    <location>
        <begin position="869"/>
        <end position="889"/>
    </location>
</feature>
<feature type="transmembrane region" description="Helical" evidence="4">
    <location>
        <begin position="903"/>
        <end position="923"/>
    </location>
</feature>
<feature type="transmembrane region" description="Helical" evidence="4">
    <location>
        <begin position="928"/>
        <end position="948"/>
    </location>
</feature>
<feature type="transmembrane region" description="Helical" evidence="4">
    <location>
        <begin position="979"/>
        <end position="999"/>
    </location>
</feature>